<feature type="peptide" id="PRO_0000395643" description="Tachykinin-related peptide 6" evidence="1">
    <location>
        <begin position="1"/>
        <end position="10"/>
    </location>
</feature>
<feature type="modified residue" description="Arginine amide" evidence="1">
    <location>
        <position position="10"/>
    </location>
</feature>
<dbReference type="GO" id="GO:0005576">
    <property type="term" value="C:extracellular region"/>
    <property type="evidence" value="ECO:0007005"/>
    <property type="project" value="UniProtKB"/>
</dbReference>
<dbReference type="GO" id="GO:0007218">
    <property type="term" value="P:neuropeptide signaling pathway"/>
    <property type="evidence" value="ECO:0007669"/>
    <property type="project" value="UniProtKB-KW"/>
</dbReference>
<sequence length="10" mass="1084">APSMGFMGMR</sequence>
<comment type="subcellular location">
    <subcellularLocation>
        <location evidence="1 3">Secreted</location>
    </subcellularLocation>
</comment>
<comment type="tissue specificity">
    <text evidence="1">Expressed in the antennal lobe (at protein level).</text>
</comment>
<evidence type="ECO:0000269" key="1">
    <source>
    </source>
</evidence>
<evidence type="ECO:0000303" key="2">
    <source>
    </source>
</evidence>
<evidence type="ECO:0000305" key="3"/>
<reference evidence="3" key="1">
    <citation type="journal article" date="2009" name="Peptides">
        <title>Neuropeptides in Heteroptera: identification of allatotropin-related peptide and tachykinin-related peptides using MALDI-TOF mass spectrometry.</title>
        <authorList>
            <person name="Neupert S."/>
            <person name="Russell W.K."/>
            <person name="Russell D.H."/>
            <person name="Lopez J.D. Jr."/>
            <person name="Predel R."/>
            <person name="Nachman R.J."/>
        </authorList>
    </citation>
    <scope>PROTEIN SEQUENCE</scope>
    <scope>SUBCELLULAR LOCATION</scope>
    <scope>TISSUE SPECIFICITY</scope>
    <scope>AMIDATION AT ARG-10</scope>
    <source>
        <tissue evidence="1">Antennal lobe</tissue>
    </source>
</reference>
<keyword id="KW-0027">Amidation</keyword>
<keyword id="KW-0903">Direct protein sequencing</keyword>
<keyword id="KW-0527">Neuropeptide</keyword>
<keyword id="KW-0964">Secreted</keyword>
<name>TRP6_EUSSE</name>
<proteinExistence type="evidence at protein level"/>
<protein>
    <recommendedName>
        <fullName evidence="2">Tachykinin-related peptide 6</fullName>
        <shortName evidence="2">TKRP-6</shortName>
    </recommendedName>
</protein>
<accession>P86574</accession>
<organism>
    <name type="scientific">Euschistus servus</name>
    <name type="common">Brown stink bug</name>
    <dbReference type="NCBI Taxonomy" id="756488"/>
    <lineage>
        <taxon>Eukaryota</taxon>
        <taxon>Metazoa</taxon>
        <taxon>Ecdysozoa</taxon>
        <taxon>Arthropoda</taxon>
        <taxon>Hexapoda</taxon>
        <taxon>Insecta</taxon>
        <taxon>Pterygota</taxon>
        <taxon>Neoptera</taxon>
        <taxon>Paraneoptera</taxon>
        <taxon>Hemiptera</taxon>
        <taxon>Heteroptera</taxon>
        <taxon>Panheteroptera</taxon>
        <taxon>Pentatomomorpha</taxon>
        <taxon>Pentatomoidea</taxon>
        <taxon>Pentatomidae</taxon>
        <taxon>Pentatominae</taxon>
        <taxon>Euschistus</taxon>
    </lineage>
</organism>